<gene>
    <name evidence="1" type="primary">adk</name>
    <name type="ordered locus">Noc_2847</name>
</gene>
<sequence length="217" mass="23848">MRAVLLGAPGSGKGTQGERLSQQYGIPQVSTGDLLRAAVAAGSELGKQAKAAMDAGELVSDQIVIGIIRERLTQPDAAKGYILDGFPRNFTQAQALDEMLATLERPLQAIILLDVNFEVLMRRLTGRRTCQACGAIYNIYFSPPEVDHRCDKCNSDQLVQRSDDNEETISNRLRVYEAQTAPLVDYYEAQGKLYKVDGEDDITKIAKNIGQILETAR</sequence>
<reference key="1">
    <citation type="journal article" date="2006" name="Appl. Environ. Microbiol.">
        <title>Complete genome sequence of the marine, chemolithoautotrophic, ammonia-oxidizing bacterium Nitrosococcus oceani ATCC 19707.</title>
        <authorList>
            <person name="Klotz M.G."/>
            <person name="Arp D.J."/>
            <person name="Chain P.S.G."/>
            <person name="El-Sheikh A.F."/>
            <person name="Hauser L.J."/>
            <person name="Hommes N.G."/>
            <person name="Larimer F.W."/>
            <person name="Malfatti S.A."/>
            <person name="Norton J.M."/>
            <person name="Poret-Peterson A.T."/>
            <person name="Vergez L.M."/>
            <person name="Ward B.B."/>
        </authorList>
    </citation>
    <scope>NUCLEOTIDE SEQUENCE [LARGE SCALE GENOMIC DNA]</scope>
    <source>
        <strain>ATCC 19707 / BCRC 17464 / JCM 30415 / NCIMB 11848 / C-107</strain>
    </source>
</reference>
<proteinExistence type="inferred from homology"/>
<evidence type="ECO:0000255" key="1">
    <source>
        <dbReference type="HAMAP-Rule" id="MF_00235"/>
    </source>
</evidence>
<comment type="function">
    <text evidence="1">Catalyzes the reversible transfer of the terminal phosphate group between ATP and AMP. Plays an important role in cellular energy homeostasis and in adenine nucleotide metabolism.</text>
</comment>
<comment type="catalytic activity">
    <reaction evidence="1">
        <text>AMP + ATP = 2 ADP</text>
        <dbReference type="Rhea" id="RHEA:12973"/>
        <dbReference type="ChEBI" id="CHEBI:30616"/>
        <dbReference type="ChEBI" id="CHEBI:456215"/>
        <dbReference type="ChEBI" id="CHEBI:456216"/>
        <dbReference type="EC" id="2.7.4.3"/>
    </reaction>
</comment>
<comment type="pathway">
    <text evidence="1">Purine metabolism; AMP biosynthesis via salvage pathway; AMP from ADP: step 1/1.</text>
</comment>
<comment type="subunit">
    <text evidence="1">Monomer.</text>
</comment>
<comment type="subcellular location">
    <subcellularLocation>
        <location evidence="1">Cytoplasm</location>
    </subcellularLocation>
</comment>
<comment type="domain">
    <text evidence="1">Consists of three domains, a large central CORE domain and two small peripheral domains, NMPbind and LID, which undergo movements during catalysis. The LID domain closes over the site of phosphoryl transfer upon ATP binding. Assembling and dissambling the active center during each catalytic cycle provides an effective means to prevent ATP hydrolysis. Some bacteria have evolved a zinc-coordinating structure that stabilizes the LID domain.</text>
</comment>
<comment type="similarity">
    <text evidence="1">Belongs to the adenylate kinase family.</text>
</comment>
<name>KAD_NITOC</name>
<keyword id="KW-0067">ATP-binding</keyword>
<keyword id="KW-0963">Cytoplasm</keyword>
<keyword id="KW-0418">Kinase</keyword>
<keyword id="KW-0479">Metal-binding</keyword>
<keyword id="KW-0545">Nucleotide biosynthesis</keyword>
<keyword id="KW-0547">Nucleotide-binding</keyword>
<keyword id="KW-1185">Reference proteome</keyword>
<keyword id="KW-0808">Transferase</keyword>
<keyword id="KW-0862">Zinc</keyword>
<dbReference type="EC" id="2.7.4.3" evidence="1"/>
<dbReference type="EMBL" id="CP000127">
    <property type="protein sequence ID" value="ABA59293.1"/>
    <property type="molecule type" value="Genomic_DNA"/>
</dbReference>
<dbReference type="RefSeq" id="WP_002813176.1">
    <property type="nucleotide sequence ID" value="NC_007484.1"/>
</dbReference>
<dbReference type="SMR" id="Q3J7A3"/>
<dbReference type="FunCoup" id="Q3J7A3">
    <property type="interactions" value="579"/>
</dbReference>
<dbReference type="STRING" id="323261.Noc_2847"/>
<dbReference type="KEGG" id="noc:Noc_2847"/>
<dbReference type="eggNOG" id="COG0563">
    <property type="taxonomic scope" value="Bacteria"/>
</dbReference>
<dbReference type="HOGENOM" id="CLU_032354_1_2_6"/>
<dbReference type="InParanoid" id="Q3J7A3"/>
<dbReference type="UniPathway" id="UPA00588">
    <property type="reaction ID" value="UER00649"/>
</dbReference>
<dbReference type="Proteomes" id="UP000006838">
    <property type="component" value="Chromosome"/>
</dbReference>
<dbReference type="GO" id="GO:0005737">
    <property type="term" value="C:cytoplasm"/>
    <property type="evidence" value="ECO:0007669"/>
    <property type="project" value="UniProtKB-SubCell"/>
</dbReference>
<dbReference type="GO" id="GO:0004017">
    <property type="term" value="F:adenylate kinase activity"/>
    <property type="evidence" value="ECO:0007669"/>
    <property type="project" value="UniProtKB-UniRule"/>
</dbReference>
<dbReference type="GO" id="GO:0005524">
    <property type="term" value="F:ATP binding"/>
    <property type="evidence" value="ECO:0007669"/>
    <property type="project" value="UniProtKB-UniRule"/>
</dbReference>
<dbReference type="GO" id="GO:0008270">
    <property type="term" value="F:zinc ion binding"/>
    <property type="evidence" value="ECO:0007669"/>
    <property type="project" value="UniProtKB-UniRule"/>
</dbReference>
<dbReference type="GO" id="GO:0044209">
    <property type="term" value="P:AMP salvage"/>
    <property type="evidence" value="ECO:0007669"/>
    <property type="project" value="UniProtKB-UniRule"/>
</dbReference>
<dbReference type="CDD" id="cd01428">
    <property type="entry name" value="ADK"/>
    <property type="match status" value="1"/>
</dbReference>
<dbReference type="FunFam" id="3.40.50.300:FF:000106">
    <property type="entry name" value="Adenylate kinase mitochondrial"/>
    <property type="match status" value="1"/>
</dbReference>
<dbReference type="Gene3D" id="3.40.50.300">
    <property type="entry name" value="P-loop containing nucleotide triphosphate hydrolases"/>
    <property type="match status" value="1"/>
</dbReference>
<dbReference type="HAMAP" id="MF_00235">
    <property type="entry name" value="Adenylate_kinase_Adk"/>
    <property type="match status" value="1"/>
</dbReference>
<dbReference type="InterPro" id="IPR006259">
    <property type="entry name" value="Adenyl_kin_sub"/>
</dbReference>
<dbReference type="InterPro" id="IPR000850">
    <property type="entry name" value="Adenylat/UMP-CMP_kin"/>
</dbReference>
<dbReference type="InterPro" id="IPR033690">
    <property type="entry name" value="Adenylat_kinase_CS"/>
</dbReference>
<dbReference type="InterPro" id="IPR007862">
    <property type="entry name" value="Adenylate_kinase_lid-dom"/>
</dbReference>
<dbReference type="InterPro" id="IPR027417">
    <property type="entry name" value="P-loop_NTPase"/>
</dbReference>
<dbReference type="NCBIfam" id="TIGR01351">
    <property type="entry name" value="adk"/>
    <property type="match status" value="1"/>
</dbReference>
<dbReference type="NCBIfam" id="NF001380">
    <property type="entry name" value="PRK00279.1-2"/>
    <property type="match status" value="1"/>
</dbReference>
<dbReference type="NCBIfam" id="NF001381">
    <property type="entry name" value="PRK00279.1-3"/>
    <property type="match status" value="1"/>
</dbReference>
<dbReference type="NCBIfam" id="NF011100">
    <property type="entry name" value="PRK14527.1"/>
    <property type="match status" value="1"/>
</dbReference>
<dbReference type="PANTHER" id="PTHR23359">
    <property type="entry name" value="NUCLEOTIDE KINASE"/>
    <property type="match status" value="1"/>
</dbReference>
<dbReference type="Pfam" id="PF00406">
    <property type="entry name" value="ADK"/>
    <property type="match status" value="1"/>
</dbReference>
<dbReference type="Pfam" id="PF05191">
    <property type="entry name" value="ADK_lid"/>
    <property type="match status" value="1"/>
</dbReference>
<dbReference type="PRINTS" id="PR00094">
    <property type="entry name" value="ADENYLTKNASE"/>
</dbReference>
<dbReference type="SUPFAM" id="SSF52540">
    <property type="entry name" value="P-loop containing nucleoside triphosphate hydrolases"/>
    <property type="match status" value="1"/>
</dbReference>
<dbReference type="PROSITE" id="PS00113">
    <property type="entry name" value="ADENYLATE_KINASE"/>
    <property type="match status" value="1"/>
</dbReference>
<accession>Q3J7A3</accession>
<feature type="chain" id="PRO_1000021750" description="Adenylate kinase">
    <location>
        <begin position="1"/>
        <end position="217"/>
    </location>
</feature>
<feature type="region of interest" description="NMP" evidence="1">
    <location>
        <begin position="30"/>
        <end position="59"/>
    </location>
</feature>
<feature type="region of interest" description="LID" evidence="1">
    <location>
        <begin position="126"/>
        <end position="164"/>
    </location>
</feature>
<feature type="binding site" evidence="1">
    <location>
        <begin position="10"/>
        <end position="15"/>
    </location>
    <ligand>
        <name>ATP</name>
        <dbReference type="ChEBI" id="CHEBI:30616"/>
    </ligand>
</feature>
<feature type="binding site" evidence="1">
    <location>
        <position position="31"/>
    </location>
    <ligand>
        <name>AMP</name>
        <dbReference type="ChEBI" id="CHEBI:456215"/>
    </ligand>
</feature>
<feature type="binding site" evidence="1">
    <location>
        <position position="36"/>
    </location>
    <ligand>
        <name>AMP</name>
        <dbReference type="ChEBI" id="CHEBI:456215"/>
    </ligand>
</feature>
<feature type="binding site" evidence="1">
    <location>
        <begin position="57"/>
        <end position="59"/>
    </location>
    <ligand>
        <name>AMP</name>
        <dbReference type="ChEBI" id="CHEBI:456215"/>
    </ligand>
</feature>
<feature type="binding site" evidence="1">
    <location>
        <begin position="85"/>
        <end position="88"/>
    </location>
    <ligand>
        <name>AMP</name>
        <dbReference type="ChEBI" id="CHEBI:456215"/>
    </ligand>
</feature>
<feature type="binding site" evidence="1">
    <location>
        <position position="92"/>
    </location>
    <ligand>
        <name>AMP</name>
        <dbReference type="ChEBI" id="CHEBI:456215"/>
    </ligand>
</feature>
<feature type="binding site" evidence="1">
    <location>
        <position position="127"/>
    </location>
    <ligand>
        <name>ATP</name>
        <dbReference type="ChEBI" id="CHEBI:30616"/>
    </ligand>
</feature>
<feature type="binding site" evidence="1">
    <location>
        <position position="130"/>
    </location>
    <ligand>
        <name>Zn(2+)</name>
        <dbReference type="ChEBI" id="CHEBI:29105"/>
        <note>structural</note>
    </ligand>
</feature>
<feature type="binding site" evidence="1">
    <location>
        <position position="133"/>
    </location>
    <ligand>
        <name>Zn(2+)</name>
        <dbReference type="ChEBI" id="CHEBI:29105"/>
        <note>structural</note>
    </ligand>
</feature>
<feature type="binding site" evidence="1">
    <location>
        <begin position="136"/>
        <end position="137"/>
    </location>
    <ligand>
        <name>ATP</name>
        <dbReference type="ChEBI" id="CHEBI:30616"/>
    </ligand>
</feature>
<feature type="binding site" evidence="1">
    <location>
        <position position="150"/>
    </location>
    <ligand>
        <name>Zn(2+)</name>
        <dbReference type="ChEBI" id="CHEBI:29105"/>
        <note>structural</note>
    </ligand>
</feature>
<feature type="binding site" evidence="1">
    <location>
        <position position="153"/>
    </location>
    <ligand>
        <name>Zn(2+)</name>
        <dbReference type="ChEBI" id="CHEBI:29105"/>
        <note>structural</note>
    </ligand>
</feature>
<feature type="binding site" evidence="1">
    <location>
        <position position="161"/>
    </location>
    <ligand>
        <name>AMP</name>
        <dbReference type="ChEBI" id="CHEBI:456215"/>
    </ligand>
</feature>
<feature type="binding site" evidence="1">
    <location>
        <position position="172"/>
    </location>
    <ligand>
        <name>AMP</name>
        <dbReference type="ChEBI" id="CHEBI:456215"/>
    </ligand>
</feature>
<feature type="binding site" evidence="1">
    <location>
        <position position="200"/>
    </location>
    <ligand>
        <name>ATP</name>
        <dbReference type="ChEBI" id="CHEBI:30616"/>
    </ligand>
</feature>
<organism>
    <name type="scientific">Nitrosococcus oceani (strain ATCC 19707 / BCRC 17464 / JCM 30415 / NCIMB 11848 / C-107)</name>
    <dbReference type="NCBI Taxonomy" id="323261"/>
    <lineage>
        <taxon>Bacteria</taxon>
        <taxon>Pseudomonadati</taxon>
        <taxon>Pseudomonadota</taxon>
        <taxon>Gammaproteobacteria</taxon>
        <taxon>Chromatiales</taxon>
        <taxon>Chromatiaceae</taxon>
        <taxon>Nitrosococcus</taxon>
    </lineage>
</organism>
<protein>
    <recommendedName>
        <fullName evidence="1">Adenylate kinase</fullName>
        <shortName evidence="1">AK</shortName>
        <ecNumber evidence="1">2.7.4.3</ecNumber>
    </recommendedName>
    <alternativeName>
        <fullName evidence="1">ATP-AMP transphosphorylase</fullName>
    </alternativeName>
    <alternativeName>
        <fullName evidence="1">ATP:AMP phosphotransferase</fullName>
    </alternativeName>
    <alternativeName>
        <fullName evidence="1">Adenylate monophosphate kinase</fullName>
    </alternativeName>
</protein>